<reference key="1">
    <citation type="journal article" date="1992" name="Nucleic Acids Res.">
        <title>Cloning and sequence of thioredoxin gene of Salmonella typhimurium LT2.</title>
        <authorList>
            <person name="Kotani H."/>
            <person name="Nakajima K."/>
        </authorList>
    </citation>
    <scope>NUCLEOTIDE SEQUENCE [GENOMIC DNA]</scope>
    <source>
        <strain>LT2</strain>
    </source>
</reference>
<reference key="2">
    <citation type="journal article" date="1993" name="J. Bacteriol.">
        <title>Characterization of the rho genes of Neisseria gonorrhoeae and Salmonella typhimurium.</title>
        <authorList>
            <person name="Miloso M."/>
            <person name="Limauro D."/>
            <person name="Alifano P."/>
            <person name="Rivellini F."/>
            <person name="Lavitola A."/>
            <person name="Gulletta E."/>
            <person name="Bruni C.B."/>
        </authorList>
    </citation>
    <scope>NUCLEOTIDE SEQUENCE [GENOMIC DNA]</scope>
    <source>
        <strain>LT2</strain>
    </source>
</reference>
<reference key="3">
    <citation type="journal article" date="2001" name="Nature">
        <title>Complete genome sequence of Salmonella enterica serovar Typhimurium LT2.</title>
        <authorList>
            <person name="McClelland M."/>
            <person name="Sanderson K.E."/>
            <person name="Spieth J."/>
            <person name="Clifton S.W."/>
            <person name="Latreille P."/>
            <person name="Courtney L."/>
            <person name="Porwollik S."/>
            <person name="Ali J."/>
            <person name="Dante M."/>
            <person name="Du F."/>
            <person name="Hou S."/>
            <person name="Layman D."/>
            <person name="Leonard S."/>
            <person name="Nguyen C."/>
            <person name="Scott K."/>
            <person name="Holmes A."/>
            <person name="Grewal N."/>
            <person name="Mulvaney E."/>
            <person name="Ryan E."/>
            <person name="Sun H."/>
            <person name="Florea L."/>
            <person name="Miller W."/>
            <person name="Stoneking T."/>
            <person name="Nhan M."/>
            <person name="Waterston R."/>
            <person name="Wilson R.K."/>
        </authorList>
    </citation>
    <scope>NUCLEOTIDE SEQUENCE [LARGE SCALE GENOMIC DNA]</scope>
    <source>
        <strain>LT2 / SGSC1412 / ATCC 700720</strain>
    </source>
</reference>
<evidence type="ECO:0000250" key="1"/>
<evidence type="ECO:0000255" key="2">
    <source>
        <dbReference type="PROSITE-ProRule" id="PRU00691"/>
    </source>
</evidence>
<evidence type="ECO:0000305" key="3"/>
<evidence type="ECO:0007829" key="4">
    <source>
        <dbReference type="PDB" id="1M7T"/>
    </source>
</evidence>
<protein>
    <recommendedName>
        <fullName>Thioredoxin 1</fullName>
        <shortName>Trx-1</shortName>
    </recommendedName>
</protein>
<sequence length="109" mass="11807">MSDKIIHLTDDSFDTDVLKADGAILVDFWAEWCGPCKMIAPILDEIADEYQGKLTVAKLNIDQNPGTAPKYGIRGIPTLLLFKNGEVAATKVGALSKGQLKEFLDANLA</sequence>
<proteinExistence type="evidence at protein level"/>
<dbReference type="EMBL" id="D10015">
    <property type="protein sequence ID" value="BAA00903.1"/>
    <property type="molecule type" value="Genomic_DNA"/>
</dbReference>
<dbReference type="EMBL" id="Z21789">
    <property type="protein sequence ID" value="CAA79851.1"/>
    <property type="molecule type" value="Genomic_DNA"/>
</dbReference>
<dbReference type="EMBL" id="AF233324">
    <property type="protein sequence ID" value="AAF33471.1"/>
    <property type="molecule type" value="Genomic_DNA"/>
</dbReference>
<dbReference type="EMBL" id="AE006468">
    <property type="protein sequence ID" value="AAL22765.1"/>
    <property type="molecule type" value="Genomic_DNA"/>
</dbReference>
<dbReference type="PIR" id="S35497">
    <property type="entry name" value="S35497"/>
</dbReference>
<dbReference type="RefSeq" id="NP_462806.1">
    <property type="nucleotide sequence ID" value="NC_003197.2"/>
</dbReference>
<dbReference type="RefSeq" id="WP_001280776.1">
    <property type="nucleotide sequence ID" value="NC_003197.2"/>
</dbReference>
<dbReference type="PDB" id="1M7T">
    <property type="method" value="NMR"/>
    <property type="chains" value="A=69-108"/>
</dbReference>
<dbReference type="PDBsum" id="1M7T"/>
<dbReference type="BMRB" id="P0AA28"/>
<dbReference type="SMR" id="P0AA28"/>
<dbReference type="STRING" id="99287.STM3915"/>
<dbReference type="PaxDb" id="99287-STM3915"/>
<dbReference type="GeneID" id="1255441"/>
<dbReference type="GeneID" id="93778163"/>
<dbReference type="KEGG" id="stm:STM3915"/>
<dbReference type="PATRIC" id="fig|99287.12.peg.4137"/>
<dbReference type="HOGENOM" id="CLU_090389_10_2_6"/>
<dbReference type="OMA" id="HIHYVTD"/>
<dbReference type="PhylomeDB" id="P0AA28"/>
<dbReference type="BioCyc" id="SENT99287:STM3915-MONOMER"/>
<dbReference type="PHI-base" id="PHI:2644"/>
<dbReference type="PRO" id="PR:P0AA28"/>
<dbReference type="Proteomes" id="UP000001014">
    <property type="component" value="Chromosome"/>
</dbReference>
<dbReference type="GO" id="GO:0005737">
    <property type="term" value="C:cytoplasm"/>
    <property type="evidence" value="ECO:0000318"/>
    <property type="project" value="GO_Central"/>
</dbReference>
<dbReference type="GO" id="GO:0005829">
    <property type="term" value="C:cytosol"/>
    <property type="evidence" value="ECO:0000318"/>
    <property type="project" value="GO_Central"/>
</dbReference>
<dbReference type="GO" id="GO:0015035">
    <property type="term" value="F:protein-disulfide reductase activity"/>
    <property type="evidence" value="ECO:0000318"/>
    <property type="project" value="GO_Central"/>
</dbReference>
<dbReference type="GO" id="GO:0045454">
    <property type="term" value="P:cell redox homeostasis"/>
    <property type="evidence" value="ECO:0000318"/>
    <property type="project" value="GO_Central"/>
</dbReference>
<dbReference type="CDD" id="cd02947">
    <property type="entry name" value="TRX_family"/>
    <property type="match status" value="1"/>
</dbReference>
<dbReference type="FunFam" id="3.40.30.10:FF:000001">
    <property type="entry name" value="Thioredoxin"/>
    <property type="match status" value="1"/>
</dbReference>
<dbReference type="Gene3D" id="3.40.30.10">
    <property type="entry name" value="Glutaredoxin"/>
    <property type="match status" value="1"/>
</dbReference>
<dbReference type="InterPro" id="IPR005746">
    <property type="entry name" value="Thioredoxin"/>
</dbReference>
<dbReference type="InterPro" id="IPR036249">
    <property type="entry name" value="Thioredoxin-like_sf"/>
</dbReference>
<dbReference type="InterPro" id="IPR017937">
    <property type="entry name" value="Thioredoxin_CS"/>
</dbReference>
<dbReference type="InterPro" id="IPR013766">
    <property type="entry name" value="Thioredoxin_domain"/>
</dbReference>
<dbReference type="NCBIfam" id="NF006898">
    <property type="entry name" value="PRK09381.1"/>
    <property type="match status" value="1"/>
</dbReference>
<dbReference type="NCBIfam" id="TIGR01068">
    <property type="entry name" value="thioredoxin"/>
    <property type="match status" value="1"/>
</dbReference>
<dbReference type="PANTHER" id="PTHR45663">
    <property type="entry name" value="GEO12009P1"/>
    <property type="match status" value="1"/>
</dbReference>
<dbReference type="PANTHER" id="PTHR45663:SF11">
    <property type="entry name" value="GEO12009P1"/>
    <property type="match status" value="1"/>
</dbReference>
<dbReference type="Pfam" id="PF00085">
    <property type="entry name" value="Thioredoxin"/>
    <property type="match status" value="1"/>
</dbReference>
<dbReference type="PIRSF" id="PIRSF000077">
    <property type="entry name" value="Thioredoxin"/>
    <property type="match status" value="1"/>
</dbReference>
<dbReference type="PRINTS" id="PR00421">
    <property type="entry name" value="THIOREDOXIN"/>
</dbReference>
<dbReference type="SUPFAM" id="SSF52833">
    <property type="entry name" value="Thioredoxin-like"/>
    <property type="match status" value="1"/>
</dbReference>
<dbReference type="PROSITE" id="PS00194">
    <property type="entry name" value="THIOREDOXIN_1"/>
    <property type="match status" value="1"/>
</dbReference>
<dbReference type="PROSITE" id="PS51352">
    <property type="entry name" value="THIOREDOXIN_2"/>
    <property type="match status" value="1"/>
</dbReference>
<comment type="function">
    <text evidence="1">Participates in various redox reactions through the reversible oxidation of its active center dithiol to a disulfide and catalyzes dithiol-disulfide exchange reactions.</text>
</comment>
<comment type="subunit">
    <text evidence="1">Monomer.</text>
</comment>
<comment type="similarity">
    <text evidence="3">Belongs to the thioredoxin family.</text>
</comment>
<accession>P0AA28</accession>
<accession>P00274</accession>
<accession>P76750</accession>
<accession>Q47674</accession>
<accession>Q8XAT2</accession>
<feature type="initiator methionine" description="Removed" evidence="1">
    <location>
        <position position="1"/>
    </location>
</feature>
<feature type="chain" id="PRO_0000120100" description="Thioredoxin 1">
    <location>
        <begin position="2"/>
        <end position="109"/>
    </location>
</feature>
<feature type="domain" description="Thioredoxin" evidence="2">
    <location>
        <begin position="2"/>
        <end position="109"/>
    </location>
</feature>
<feature type="active site" description="Nucleophile" evidence="1">
    <location>
        <position position="33"/>
    </location>
</feature>
<feature type="active site" description="Nucleophile" evidence="1">
    <location>
        <position position="36"/>
    </location>
</feature>
<feature type="site" description="Deprotonates C-terminal active site Cys" evidence="1">
    <location>
        <position position="27"/>
    </location>
</feature>
<feature type="site" description="Contributes to redox potential value" evidence="1">
    <location>
        <position position="34"/>
    </location>
</feature>
<feature type="site" description="Contributes to redox potential value" evidence="1">
    <location>
        <position position="35"/>
    </location>
</feature>
<feature type="disulfide bond" description="Redox-active" evidence="2">
    <location>
        <begin position="33"/>
        <end position="36"/>
    </location>
</feature>
<feature type="strand" evidence="4">
    <location>
        <begin position="75"/>
        <end position="83"/>
    </location>
</feature>
<feature type="strand" evidence="4">
    <location>
        <begin position="86"/>
        <end position="91"/>
    </location>
</feature>
<feature type="helix" evidence="4">
    <location>
        <begin position="97"/>
        <end position="107"/>
    </location>
</feature>
<keyword id="KW-0002">3D-structure</keyword>
<keyword id="KW-1015">Disulfide bond</keyword>
<keyword id="KW-0249">Electron transport</keyword>
<keyword id="KW-0676">Redox-active center</keyword>
<keyword id="KW-1185">Reference proteome</keyword>
<keyword id="KW-0813">Transport</keyword>
<organism>
    <name type="scientific">Salmonella typhimurium (strain LT2 / SGSC1412 / ATCC 700720)</name>
    <dbReference type="NCBI Taxonomy" id="99287"/>
    <lineage>
        <taxon>Bacteria</taxon>
        <taxon>Pseudomonadati</taxon>
        <taxon>Pseudomonadota</taxon>
        <taxon>Gammaproteobacteria</taxon>
        <taxon>Enterobacterales</taxon>
        <taxon>Enterobacteriaceae</taxon>
        <taxon>Salmonella</taxon>
    </lineage>
</organism>
<gene>
    <name type="primary">trxA</name>
    <name type="ordered locus">STM3915</name>
    <name type="ORF">STMD1.75</name>
</gene>
<name>THIO_SALTY</name>